<organism>
    <name type="scientific">Arabidopsis thaliana</name>
    <name type="common">Mouse-ear cress</name>
    <dbReference type="NCBI Taxonomy" id="3702"/>
    <lineage>
        <taxon>Eukaryota</taxon>
        <taxon>Viridiplantae</taxon>
        <taxon>Streptophyta</taxon>
        <taxon>Embryophyta</taxon>
        <taxon>Tracheophyta</taxon>
        <taxon>Spermatophyta</taxon>
        <taxon>Magnoliopsida</taxon>
        <taxon>eudicotyledons</taxon>
        <taxon>Gunneridae</taxon>
        <taxon>Pentapetalae</taxon>
        <taxon>rosids</taxon>
        <taxon>malvids</taxon>
        <taxon>Brassicales</taxon>
        <taxon>Brassicaceae</taxon>
        <taxon>Camelineae</taxon>
        <taxon>Arabidopsis</taxon>
    </lineage>
</organism>
<proteinExistence type="evidence at protein level"/>
<feature type="chain" id="PRO_0000330777" description="Transcription factor TCP3">
    <location>
        <begin position="1"/>
        <end position="391"/>
    </location>
</feature>
<feature type="domain" description="TCP" evidence="1">
    <location>
        <begin position="49"/>
        <end position="107"/>
    </location>
</feature>
<feature type="region of interest" description="Disordered" evidence="2">
    <location>
        <begin position="1"/>
        <end position="34"/>
    </location>
</feature>
<feature type="region of interest" description="Disordered" evidence="2">
    <location>
        <begin position="122"/>
        <end position="168"/>
    </location>
</feature>
<feature type="region of interest" description="Disordered" evidence="2">
    <location>
        <begin position="317"/>
        <end position="345"/>
    </location>
</feature>
<feature type="region of interest" description="Disordered" evidence="2">
    <location>
        <begin position="363"/>
        <end position="391"/>
    </location>
</feature>
<feature type="compositionally biased region" description="Polar residues" evidence="2">
    <location>
        <begin position="381"/>
        <end position="391"/>
    </location>
</feature>
<evidence type="ECO:0000255" key="1">
    <source>
        <dbReference type="PROSITE-ProRule" id="PRU00701"/>
    </source>
</evidence>
<evidence type="ECO:0000256" key="2">
    <source>
        <dbReference type="SAM" id="MobiDB-lite"/>
    </source>
</evidence>
<evidence type="ECO:0000269" key="3">
    <source>
    </source>
</evidence>
<evidence type="ECO:0000269" key="4">
    <source>
    </source>
</evidence>
<evidence type="ECO:0000269" key="5">
    <source>
    </source>
</evidence>
<evidence type="ECO:0000269" key="6">
    <source>
    </source>
</evidence>
<evidence type="ECO:0000269" key="7">
    <source ref="10"/>
</evidence>
<evidence type="ECO:0000305" key="8"/>
<reference key="1">
    <citation type="journal article" date="2000" name="Nature">
        <title>Sequence and analysis of chromosome 1 of the plant Arabidopsis thaliana.</title>
        <authorList>
            <person name="Theologis A."/>
            <person name="Ecker J.R."/>
            <person name="Palm C.J."/>
            <person name="Federspiel N.A."/>
            <person name="Kaul S."/>
            <person name="White O."/>
            <person name="Alonso J."/>
            <person name="Altafi H."/>
            <person name="Araujo R."/>
            <person name="Bowman C.L."/>
            <person name="Brooks S.Y."/>
            <person name="Buehler E."/>
            <person name="Chan A."/>
            <person name="Chao Q."/>
            <person name="Chen H."/>
            <person name="Cheuk R.F."/>
            <person name="Chin C.W."/>
            <person name="Chung M.K."/>
            <person name="Conn L."/>
            <person name="Conway A.B."/>
            <person name="Conway A.R."/>
            <person name="Creasy T.H."/>
            <person name="Dewar K."/>
            <person name="Dunn P."/>
            <person name="Etgu P."/>
            <person name="Feldblyum T.V."/>
            <person name="Feng J.-D."/>
            <person name="Fong B."/>
            <person name="Fujii C.Y."/>
            <person name="Gill J.E."/>
            <person name="Goldsmith A.D."/>
            <person name="Haas B."/>
            <person name="Hansen N.F."/>
            <person name="Hughes B."/>
            <person name="Huizar L."/>
            <person name="Hunter J.L."/>
            <person name="Jenkins J."/>
            <person name="Johnson-Hopson C."/>
            <person name="Khan S."/>
            <person name="Khaykin E."/>
            <person name="Kim C.J."/>
            <person name="Koo H.L."/>
            <person name="Kremenetskaia I."/>
            <person name="Kurtz D.B."/>
            <person name="Kwan A."/>
            <person name="Lam B."/>
            <person name="Langin-Hooper S."/>
            <person name="Lee A."/>
            <person name="Lee J.M."/>
            <person name="Lenz C.A."/>
            <person name="Li J.H."/>
            <person name="Li Y.-P."/>
            <person name="Lin X."/>
            <person name="Liu S.X."/>
            <person name="Liu Z.A."/>
            <person name="Luros J.S."/>
            <person name="Maiti R."/>
            <person name="Marziali A."/>
            <person name="Militscher J."/>
            <person name="Miranda M."/>
            <person name="Nguyen M."/>
            <person name="Nierman W.C."/>
            <person name="Osborne B.I."/>
            <person name="Pai G."/>
            <person name="Peterson J."/>
            <person name="Pham P.K."/>
            <person name="Rizzo M."/>
            <person name="Rooney T."/>
            <person name="Rowley D."/>
            <person name="Sakano H."/>
            <person name="Salzberg S.L."/>
            <person name="Schwartz J.R."/>
            <person name="Shinn P."/>
            <person name="Southwick A.M."/>
            <person name="Sun H."/>
            <person name="Tallon L.J."/>
            <person name="Tambunga G."/>
            <person name="Toriumi M.J."/>
            <person name="Town C.D."/>
            <person name="Utterback T."/>
            <person name="Van Aken S."/>
            <person name="Vaysberg M."/>
            <person name="Vysotskaia V.S."/>
            <person name="Walker M."/>
            <person name="Wu D."/>
            <person name="Yu G."/>
            <person name="Fraser C.M."/>
            <person name="Venter J.C."/>
            <person name="Davis R.W."/>
        </authorList>
    </citation>
    <scope>NUCLEOTIDE SEQUENCE [LARGE SCALE GENOMIC DNA]</scope>
    <source>
        <strain>cv. Columbia</strain>
    </source>
</reference>
<reference key="2">
    <citation type="journal article" date="2017" name="Plant J.">
        <title>Araport11: a complete reannotation of the Arabidopsis thaliana reference genome.</title>
        <authorList>
            <person name="Cheng C.Y."/>
            <person name="Krishnakumar V."/>
            <person name="Chan A.P."/>
            <person name="Thibaud-Nissen F."/>
            <person name="Schobel S."/>
            <person name="Town C.D."/>
        </authorList>
    </citation>
    <scope>GENOME REANNOTATION</scope>
    <source>
        <strain>cv. Columbia</strain>
    </source>
</reference>
<reference key="3">
    <citation type="journal article" date="2003" name="Science">
        <title>Empirical analysis of transcriptional activity in the Arabidopsis genome.</title>
        <authorList>
            <person name="Yamada K."/>
            <person name="Lim J."/>
            <person name="Dale J.M."/>
            <person name="Chen H."/>
            <person name="Shinn P."/>
            <person name="Palm C.J."/>
            <person name="Southwick A.M."/>
            <person name="Wu H.C."/>
            <person name="Kim C.J."/>
            <person name="Nguyen M."/>
            <person name="Pham P.K."/>
            <person name="Cheuk R.F."/>
            <person name="Karlin-Newmann G."/>
            <person name="Liu S.X."/>
            <person name="Lam B."/>
            <person name="Sakano H."/>
            <person name="Wu T."/>
            <person name="Yu G."/>
            <person name="Miranda M."/>
            <person name="Quach H.L."/>
            <person name="Tripp M."/>
            <person name="Chang C.H."/>
            <person name="Lee J.M."/>
            <person name="Toriumi M.J."/>
            <person name="Chan M.M."/>
            <person name="Tang C.C."/>
            <person name="Onodera C.S."/>
            <person name="Deng J.M."/>
            <person name="Akiyama K."/>
            <person name="Ansari Y."/>
            <person name="Arakawa T."/>
            <person name="Banh J."/>
            <person name="Banno F."/>
            <person name="Bowser L."/>
            <person name="Brooks S.Y."/>
            <person name="Carninci P."/>
            <person name="Chao Q."/>
            <person name="Choy N."/>
            <person name="Enju A."/>
            <person name="Goldsmith A.D."/>
            <person name="Gurjal M."/>
            <person name="Hansen N.F."/>
            <person name="Hayashizaki Y."/>
            <person name="Johnson-Hopson C."/>
            <person name="Hsuan V.W."/>
            <person name="Iida K."/>
            <person name="Karnes M."/>
            <person name="Khan S."/>
            <person name="Koesema E."/>
            <person name="Ishida J."/>
            <person name="Jiang P.X."/>
            <person name="Jones T."/>
            <person name="Kawai J."/>
            <person name="Kamiya A."/>
            <person name="Meyers C."/>
            <person name="Nakajima M."/>
            <person name="Narusaka M."/>
            <person name="Seki M."/>
            <person name="Sakurai T."/>
            <person name="Satou M."/>
            <person name="Tamse R."/>
            <person name="Vaysberg M."/>
            <person name="Wallender E.K."/>
            <person name="Wong C."/>
            <person name="Yamamura Y."/>
            <person name="Yuan S."/>
            <person name="Shinozaki K."/>
            <person name="Davis R.W."/>
            <person name="Theologis A."/>
            <person name="Ecker J.R."/>
        </authorList>
    </citation>
    <scope>NUCLEOTIDE SEQUENCE [LARGE SCALE MRNA]</scope>
    <source>
        <strain>cv. Columbia</strain>
    </source>
</reference>
<reference key="4">
    <citation type="submission" date="1998-06" db="EMBL/GenBank/DDBJ databases">
        <title>Arabidopsis EST (Accession T45419) with homology to teosinte branched.</title>
        <authorList>
            <person name="Doebley J."/>
            <person name="Lauter N."/>
            <person name="Stec A."/>
        </authorList>
    </citation>
    <scope>NUCLEOTIDE SEQUENCE [MRNA] OF 4-391</scope>
</reference>
<reference key="5">
    <citation type="journal article" date="1999" name="Plant J.">
        <title>The TCP domain: a motif found in proteins regulating plant growth and development.</title>
        <authorList>
            <person name="Cubas P."/>
            <person name="Lauter N."/>
            <person name="Doebley J."/>
            <person name="Coen E."/>
        </authorList>
    </citation>
    <scope>DEVELOPMENTAL STAGE</scope>
</reference>
<reference key="6">
    <citation type="journal article" date="2007" name="Plant Cell">
        <title>Arabidopsis BRANCHED1 acts as an integrator of branching signals within axillary buds.</title>
        <authorList>
            <person name="Aguilar-Martinez J.A."/>
            <person name="Poza-Carrion C."/>
            <person name="Cubas P."/>
        </authorList>
    </citation>
    <scope>GENE FAMILY</scope>
    <scope>NOMENCLATURE</scope>
</reference>
<reference key="7">
    <citation type="journal article" date="2007" name="Plant Cell">
        <title>TCP transcription factors control the morphology of shoot lateral organs via negative regulation of the expression of boundary-specific genes in Arabidopsis.</title>
        <authorList>
            <person name="Koyama T."/>
            <person name="Furutani M."/>
            <person name="Tasaka M."/>
            <person name="Ohme-Takagi M."/>
        </authorList>
    </citation>
    <scope>FUNCTION</scope>
    <scope>DEVELOPMENTAL STAGE</scope>
    <scope>TISSUE SPECIFICITY</scope>
</reference>
<reference key="8">
    <citation type="journal article" date="2014" name="J. Genet. Genomics">
        <title>SPOROCYTELESS is a novel embryophyte-specific transcription repressor that interacts with TPL and TCP proteins in Arabidopsis.</title>
        <authorList>
            <person name="Chen G.H."/>
            <person name="Sun J.Y."/>
            <person name="Liu M."/>
            <person name="Liu J."/>
            <person name="Yang W.C."/>
        </authorList>
    </citation>
    <scope>INTERACTION WITH SPL</scope>
</reference>
<reference key="9">
    <citation type="journal article" date="2015" name="Cell Res.">
        <title>The molecular mechanism of sporocyteless/nozzle in controlling Arabidopsis ovule development.</title>
        <authorList>
            <person name="Wei B."/>
            <person name="Zhang J."/>
            <person name="Pang C."/>
            <person name="Yu H."/>
            <person name="Guo D."/>
            <person name="Jiang H."/>
            <person name="Ding M."/>
            <person name="Chen Z."/>
            <person name="Tao Q."/>
            <person name="Gu H."/>
            <person name="Qu L.J."/>
            <person name="Qin G."/>
        </authorList>
    </citation>
    <scope>FUNCTION</scope>
    <scope>INTERACTION WITH SPL</scope>
    <scope>DEVELOPMENTAL STAGE</scope>
</reference>
<reference key="10">
    <citation type="journal article" date="2016" name="Curr. Plant Biol.">
        <title>A protein-protein interaction network linking the energy-sensor kinase SnRK1 to multiple signaling pathways in Arabidopsis thaliana.</title>
        <authorList>
            <person name="Nietzsche M."/>
            <person name="Landgraf R."/>
            <person name="Tohge T."/>
            <person name="Boernke F."/>
        </authorList>
    </citation>
    <scope>INTERACTION WITH KIN10; KIN11 AND FLZ3</scope>
</reference>
<name>TCP3_ARATH</name>
<gene>
    <name type="primary">TCP3</name>
    <name type="ordered locus">At1g53230</name>
    <name type="ORF">F12M16.13</name>
</gene>
<protein>
    <recommendedName>
        <fullName>Transcription factor TCP3</fullName>
    </recommendedName>
</protein>
<comment type="function">
    <text evidence="4 5">Plays a pivotal role in the control of morphogenesis of shoot organs by negatively regulating the expression of boundary-specific genes such as CUC genes, probably through the induction of miRNA (e.g. miR164). Participates in ovule development (PubMed:25378179).</text>
</comment>
<comment type="subunit">
    <text evidence="5 6 7">Interacts with SPL. Interacts with KIN10; KIN11 and FLZ3 (Ref.10).</text>
</comment>
<comment type="interaction">
    <interactant intactId="EBI-25522447">
        <id>Q9MAH8</id>
    </interactant>
    <interactant intactId="EBI-1100950">
        <id>O80366</id>
        <label>ARR9</label>
    </interactant>
    <organismsDiffer>false</organismsDiffer>
    <experiments>3</experiments>
</comment>
<comment type="interaction">
    <interactant intactId="EBI-25522447">
        <id>Q9MAH8</id>
    </interactant>
    <interactant intactId="EBI-25522944">
        <id>Q9ZT48</id>
        <label>ATE1</label>
    </interactant>
    <organismsDiffer>false</organismsDiffer>
    <experiments>3</experiments>
</comment>
<comment type="interaction">
    <interactant intactId="EBI-25522447">
        <id>Q9MAH8</id>
    </interactant>
    <interactant intactId="EBI-1803261">
        <id>Q8S307</id>
        <label>BZR1</label>
    </interactant>
    <organismsDiffer>false</organismsDiffer>
    <experiments>3</experiments>
</comment>
<comment type="interaction">
    <interactant intactId="EBI-25522447">
        <id>Q9MAH8</id>
    </interactant>
    <interactant intactId="EBI-25523668">
        <id>Q9C5I3</id>
        <label>ERF11</label>
    </interactant>
    <organismsDiffer>false</organismsDiffer>
    <experiments>3</experiments>
</comment>
<comment type="interaction">
    <interactant intactId="EBI-25522447">
        <id>Q9MAH8</id>
    </interactant>
    <interactant intactId="EBI-4446727">
        <id>Q94ID6</id>
        <label>ERF12</label>
    </interactant>
    <organismsDiffer>false</organismsDiffer>
    <experiments>3</experiments>
</comment>
<comment type="interaction">
    <interactant intactId="EBI-25522447">
        <id>Q9MAH8</id>
    </interactant>
    <interactant intactId="EBI-966009">
        <id>O80340</id>
        <label>ERF4</label>
    </interactant>
    <organismsDiffer>false</organismsDiffer>
    <experiments>3</experiments>
</comment>
<comment type="interaction">
    <interactant intactId="EBI-25522447">
        <id>Q9MAH8</id>
    </interactant>
    <interactant intactId="EBI-2000137">
        <id>Q9MAI5</id>
        <label>ERF8</label>
    </interactant>
    <organismsDiffer>false</organismsDiffer>
    <experiments>3</experiments>
</comment>
<comment type="interaction">
    <interactant intactId="EBI-25522447">
        <id>Q9MAH8</id>
    </interactant>
    <interactant intactId="EBI-4431933">
        <id>Q9FE67</id>
        <label>ERF9</label>
    </interactant>
    <organismsDiffer>false</organismsDiffer>
    <experiments>3</experiments>
</comment>
<comment type="interaction">
    <interactant intactId="EBI-25522447">
        <id>Q9MAH8</id>
    </interactant>
    <interactant intactId="EBI-2460434">
        <id>Q9LRH6</id>
        <label>GATA25</label>
    </interactant>
    <organismsDiffer>false</organismsDiffer>
    <experiments>3</experiments>
</comment>
<comment type="interaction">
    <interactant intactId="EBI-25522447">
        <id>Q9MAH8</id>
    </interactant>
    <interactant intactId="EBI-3946434">
        <id>Q38828</id>
        <label>IAA10</label>
    </interactant>
    <organismsDiffer>false</organismsDiffer>
    <experiments>3</experiments>
</comment>
<comment type="interaction">
    <interactant intactId="EBI-25522447">
        <id>Q9MAH8</id>
    </interactant>
    <interactant intactId="EBI-25524519">
        <id>A0A2H1ZEF6</id>
        <label>IAA15</label>
    </interactant>
    <organismsDiffer>false</organismsDiffer>
    <experiments>3</experiments>
</comment>
<comment type="interaction">
    <interactant intactId="EBI-25522447">
        <id>Q9MAH8</id>
    </interactant>
    <interactant intactId="EBI-632231">
        <id>O24407</id>
        <label>IAA16</label>
    </interactant>
    <organismsDiffer>false</organismsDiffer>
    <experiments>3</experiments>
</comment>
<comment type="interaction">
    <interactant intactId="EBI-25522447">
        <id>Q9MAH8</id>
    </interactant>
    <interactant intactId="EBI-632243">
        <id>P93830</id>
        <label>IAA17</label>
    </interactant>
    <organismsDiffer>false</organismsDiffer>
    <experiments>3</experiments>
</comment>
<comment type="interaction">
    <interactant intactId="EBI-25522447">
        <id>Q9MAH8</id>
    </interactant>
    <interactant intactId="EBI-632257">
        <id>O24409</id>
        <label>IAA19</label>
    </interactant>
    <organismsDiffer>false</organismsDiffer>
    <experiments>3</experiments>
</comment>
<comment type="interaction">
    <interactant intactId="EBI-25522447">
        <id>Q9MAH8</id>
    </interactant>
    <interactant intactId="EBI-632272">
        <id>O24410</id>
        <label>IAA20</label>
    </interactant>
    <organismsDiffer>false</organismsDiffer>
    <experiments>3</experiments>
</comment>
<comment type="interaction">
    <interactant intactId="EBI-25522447">
        <id>Q9MAH8</id>
    </interactant>
    <interactant intactId="EBI-3946677">
        <id>Q9ZSY8</id>
        <label>IAA27</label>
    </interactant>
    <organismsDiffer>false</organismsDiffer>
    <experiments>3</experiments>
</comment>
<comment type="interaction">
    <interactant intactId="EBI-25522447">
        <id>Q9MAH8</id>
    </interactant>
    <interactant intactId="EBI-3133404">
        <id>Q9XFM0</id>
        <label>IAA28</label>
    </interactant>
    <organismsDiffer>false</organismsDiffer>
    <experiments>3</experiments>
</comment>
<comment type="interaction">
    <interactant intactId="EBI-25522447">
        <id>Q9MAH8</id>
    </interactant>
    <interactant intactId="EBI-307174">
        <id>Q38822</id>
        <label>IAA3</label>
    </interactant>
    <organismsDiffer>false</organismsDiffer>
    <experiments>3</experiments>
</comment>
<comment type="interaction">
    <interactant intactId="EBI-25522447">
        <id>Q9MAH8</id>
    </interactant>
    <interactant intactId="EBI-3946448">
        <id>Q8RYC6</id>
        <label>IAA32</label>
    </interactant>
    <organismsDiffer>false</organismsDiffer>
    <experiments>3</experiments>
</comment>
<comment type="interaction">
    <interactant intactId="EBI-25522447">
        <id>Q9MAH8</id>
    </interactant>
    <interactant intactId="EBI-3946739">
        <id>Q9FKM7</id>
        <label>IAA33</label>
    </interactant>
    <organismsDiffer>false</organismsDiffer>
    <experiments>3</experiments>
</comment>
<comment type="interaction">
    <interactant intactId="EBI-25522447">
        <id>Q9MAH8</id>
    </interactant>
    <interactant intactId="EBI-3946459">
        <id>Q9C5X0</id>
        <label>IAA34</label>
    </interactant>
    <organismsDiffer>false</organismsDiffer>
    <experiments>3</experiments>
</comment>
<comment type="interaction">
    <interactant intactId="EBI-25522447">
        <id>Q9MAH8</id>
    </interactant>
    <interactant intactId="EBI-3946487">
        <id>P33078</id>
        <label>IAA5</label>
    </interactant>
    <organismsDiffer>false</organismsDiffer>
    <experiments>3</experiments>
</comment>
<comment type="interaction">
    <interactant intactId="EBI-25522447">
        <id>Q9MAH8</id>
    </interactant>
    <interactant intactId="EBI-1554124">
        <id>Q38824</id>
        <label>IAA6</label>
    </interactant>
    <organismsDiffer>false</organismsDiffer>
    <experiments>3</experiments>
</comment>
<comment type="interaction">
    <interactant intactId="EBI-25522447">
        <id>Q9MAH8</id>
    </interactant>
    <interactant intactId="EBI-632200">
        <id>Q38826</id>
        <label>IAA8</label>
    </interactant>
    <organismsDiffer>false</organismsDiffer>
    <experiments>3</experiments>
</comment>
<comment type="interaction">
    <interactant intactId="EBI-25522447">
        <id>Q9MAH8</id>
    </interactant>
    <interactant intactId="EBI-632216">
        <id>Q38827</id>
        <label>IAA9</label>
    </interactant>
    <organismsDiffer>false</organismsDiffer>
    <experiments>3</experiments>
</comment>
<comment type="interaction">
    <interactant intactId="EBI-25522447">
        <id>Q9MAH8</id>
    </interactant>
    <interactant intactId="EBI-541099">
        <id>Q9FNZ5</id>
        <label>NIMIN-1</label>
    </interactant>
    <organismsDiffer>false</organismsDiffer>
    <experiments>3</experiments>
</comment>
<comment type="interaction">
    <interactant intactId="EBI-25522447">
        <id>Q9MAH8</id>
    </interactant>
    <interactant intactId="EBI-541107">
        <id>Q9LUA3</id>
        <label>NIMIN-2</label>
    </interactant>
    <organismsDiffer>false</organismsDiffer>
    <experiments>3</experiments>
</comment>
<comment type="interaction">
    <interactant intactId="EBI-25522447">
        <id>Q9MAH8</id>
    </interactant>
    <interactant intactId="EBI-541115">
        <id>Q9FNZ4</id>
        <label>NIMIN-3</label>
    </interactant>
    <organismsDiffer>false</organismsDiffer>
    <experiments>3</experiments>
</comment>
<comment type="interaction">
    <interactant intactId="EBI-25522447">
        <id>Q9MAH8</id>
    </interactant>
    <interactant intactId="EBI-2363192">
        <id>Q8S8E3</id>
        <label>PYL6</label>
    </interactant>
    <organismsDiffer>false</organismsDiffer>
    <experiments>3</experiments>
</comment>
<comment type="interaction">
    <interactant intactId="EBI-25522447">
        <id>Q9MAH8</id>
    </interactant>
    <interactant intactId="EBI-2349513">
        <id>Q84MC7</id>
        <label>PYL9</label>
    </interactant>
    <organismsDiffer>false</organismsDiffer>
    <experiments>3</experiments>
</comment>
<comment type="interaction">
    <interactant intactId="EBI-25522447">
        <id>Q9MAH8</id>
    </interactant>
    <interactant intactId="EBI-963624">
        <id>Q9SLH3</id>
        <label>RGA</label>
    </interactant>
    <organismsDiffer>false</organismsDiffer>
    <experiments>3</experiments>
</comment>
<comment type="interaction">
    <interactant intactId="EBI-25522447">
        <id>Q9MAH8</id>
    </interactant>
    <interactant intactId="EBI-1388539">
        <id>Q9LMA8</id>
        <label>TIFY10A</label>
    </interactant>
    <organismsDiffer>false</organismsDiffer>
    <experiments>3</experiments>
</comment>
<comment type="interaction">
    <interactant intactId="EBI-25522447">
        <id>Q9MAH8</id>
    </interactant>
    <interactant intactId="EBI-1792563">
        <id>Q9S7M2</id>
        <label>TIFY10B</label>
    </interactant>
    <organismsDiffer>false</organismsDiffer>
    <experiments>3</experiments>
</comment>
<comment type="interaction">
    <interactant intactId="EBI-25522447">
        <id>Q9MAH8</id>
    </interactant>
    <interactant intactId="EBI-1792431">
        <id>Q9LVI4</id>
        <label>TIFY6B</label>
    </interactant>
    <organismsDiffer>false</organismsDiffer>
    <experiments>3</experiments>
</comment>
<comment type="interaction">
    <interactant intactId="EBI-25522447">
        <id>Q9MAH8</id>
    </interactant>
    <interactant intactId="EBI-1792583">
        <id>Q8W4J8</id>
        <label>TIFY7</label>
    </interactant>
    <organismsDiffer>false</organismsDiffer>
    <experiments>3</experiments>
</comment>
<comment type="subcellular location">
    <subcellularLocation>
        <location evidence="8">Nucleus</location>
    </subcellularLocation>
</comment>
<comment type="tissue specificity">
    <text evidence="4">Expressed in cotyledons, particularly in the vascular region, in leaves, roots, buds, flowers and immature siliques.</text>
</comment>
<comment type="developmental stage">
    <text evidence="3 4 5">First observed in the distal and middle regions of cotyledons of torpedo-shaped embryos. Later localized in bending cotyledon, and mature embryos, but no signals were detected in the presumptive shoot apical meristem (SAM) and the boundary region during embryogenesis. During flower development, first observed throughout the floral meristem. Later expressed in rapidly growing floral primordia. Detected to a lower extent in vegetative primordia. During flower development, first observed throughout the floral meristem. Expressed during ovule development (PubMed:25378179).</text>
</comment>
<comment type="sequence caution" evidence="8">
    <conflict type="erroneous initiation">
        <sequence resource="EMBL-CDS" id="AAC24010"/>
    </conflict>
    <text>Truncated N-terminus.</text>
</comment>
<sequence>MAPDNDHFLDSPSPPLLEMRHHQSATENGGGCGEIVEVQGGHIVRSTGRKDRHSKVCTAKGPRDRRVRLSAPTAIQFYDVQDRLGFDRPSKAVDWLITKAKSAIDDLAQLPPWNPADTLRQHAAAAANAKPRKTKTLISPPPPQPEETEHHRIGEEEDNESSFLPASMDSDSIADTIKSFFPVASTQQSYHHQPPSRGNTQNQDLLRLSLQSFQNGPPFPNQTEPALFSGQSNNQLAFDSSTASWEQSHQSPEFGKIQRLVSWNNVGAAESAGSTGGFVFASPSSLHPVYSQSQLLSQRGPLQSINTPMIRAWFDPHHHHHHHQQSMTTDDLHHHHPYHIPPGIHQSAIPGIAFASSGEFSGFRIPARFQGEQEEHGGDNKPSSASSDSRH</sequence>
<dbReference type="EMBL" id="AC008007">
    <property type="protein sequence ID" value="AAF69550.1"/>
    <property type="molecule type" value="Genomic_DNA"/>
</dbReference>
<dbReference type="EMBL" id="CP002684">
    <property type="protein sequence ID" value="AEE32909.1"/>
    <property type="molecule type" value="Genomic_DNA"/>
</dbReference>
<dbReference type="EMBL" id="CP002684">
    <property type="protein sequence ID" value="ANM60190.1"/>
    <property type="molecule type" value="Genomic_DNA"/>
</dbReference>
<dbReference type="EMBL" id="AY099678">
    <property type="protein sequence ID" value="AAM20529.1"/>
    <property type="molecule type" value="mRNA"/>
</dbReference>
<dbReference type="EMBL" id="BT000266">
    <property type="protein sequence ID" value="AAN15585.1"/>
    <property type="molecule type" value="mRNA"/>
</dbReference>
<dbReference type="EMBL" id="AF072134">
    <property type="protein sequence ID" value="AAC24010.1"/>
    <property type="status" value="ALT_INIT"/>
    <property type="molecule type" value="mRNA"/>
</dbReference>
<dbReference type="PIR" id="H96572">
    <property type="entry name" value="H96572"/>
</dbReference>
<dbReference type="PIR" id="T52182">
    <property type="entry name" value="T52182"/>
</dbReference>
<dbReference type="RefSeq" id="NP_001322492.1">
    <property type="nucleotide sequence ID" value="NM_001333584.1"/>
</dbReference>
<dbReference type="RefSeq" id="NP_564624.2">
    <property type="nucleotide sequence ID" value="NM_104201.3"/>
</dbReference>
<dbReference type="SMR" id="Q9MAH8"/>
<dbReference type="BioGRID" id="26981">
    <property type="interactions" value="73"/>
</dbReference>
<dbReference type="FunCoup" id="Q9MAH8">
    <property type="interactions" value="541"/>
</dbReference>
<dbReference type="IntAct" id="Q9MAH8">
    <property type="interactions" value="47"/>
</dbReference>
<dbReference type="STRING" id="3702.Q9MAH8"/>
<dbReference type="GlyGen" id="Q9MAH8">
    <property type="glycosylation" value="2 sites, 1 O-linked glycan (2 sites)"/>
</dbReference>
<dbReference type="PaxDb" id="3702-AT1G53230.1"/>
<dbReference type="ProteomicsDB" id="234385"/>
<dbReference type="DNASU" id="841756"/>
<dbReference type="EnsemblPlants" id="AT1G53230.1">
    <property type="protein sequence ID" value="AT1G53230.1"/>
    <property type="gene ID" value="AT1G53230"/>
</dbReference>
<dbReference type="EnsemblPlants" id="AT1G53230.2">
    <property type="protein sequence ID" value="AT1G53230.2"/>
    <property type="gene ID" value="AT1G53230"/>
</dbReference>
<dbReference type="GeneID" id="841756"/>
<dbReference type="Gramene" id="AT1G53230.1">
    <property type="protein sequence ID" value="AT1G53230.1"/>
    <property type="gene ID" value="AT1G53230"/>
</dbReference>
<dbReference type="Gramene" id="AT1G53230.2">
    <property type="protein sequence ID" value="AT1G53230.2"/>
    <property type="gene ID" value="AT1G53230"/>
</dbReference>
<dbReference type="KEGG" id="ath:AT1G53230"/>
<dbReference type="Araport" id="AT1G53230"/>
<dbReference type="TAIR" id="AT1G53230">
    <property type="gene designation" value="TCP3"/>
</dbReference>
<dbReference type="eggNOG" id="ENOG502QRP9">
    <property type="taxonomic scope" value="Eukaryota"/>
</dbReference>
<dbReference type="HOGENOM" id="CLU_033594_0_0_1"/>
<dbReference type="InParanoid" id="Q9MAH8"/>
<dbReference type="OMA" id="FADETEH"/>
<dbReference type="OrthoDB" id="1927134at2759"/>
<dbReference type="PhylomeDB" id="Q9MAH8"/>
<dbReference type="PRO" id="PR:Q9MAH8"/>
<dbReference type="Proteomes" id="UP000006548">
    <property type="component" value="Chromosome 1"/>
</dbReference>
<dbReference type="ExpressionAtlas" id="Q9MAH8">
    <property type="expression patterns" value="baseline and differential"/>
</dbReference>
<dbReference type="GO" id="GO:0005634">
    <property type="term" value="C:nucleus"/>
    <property type="evidence" value="ECO:0007669"/>
    <property type="project" value="UniProtKB-SubCell"/>
</dbReference>
<dbReference type="GO" id="GO:0003677">
    <property type="term" value="F:DNA binding"/>
    <property type="evidence" value="ECO:0007669"/>
    <property type="project" value="UniProtKB-KW"/>
</dbReference>
<dbReference type="GO" id="GO:0003700">
    <property type="term" value="F:DNA-binding transcription factor activity"/>
    <property type="evidence" value="ECO:0000250"/>
    <property type="project" value="TAIR"/>
</dbReference>
<dbReference type="GO" id="GO:0048366">
    <property type="term" value="P:leaf development"/>
    <property type="evidence" value="ECO:0000316"/>
    <property type="project" value="TAIR"/>
</dbReference>
<dbReference type="GO" id="GO:0010150">
    <property type="term" value="P:leaf senescence"/>
    <property type="evidence" value="ECO:0000316"/>
    <property type="project" value="TAIR"/>
</dbReference>
<dbReference type="GO" id="GO:0006355">
    <property type="term" value="P:regulation of DNA-templated transcription"/>
    <property type="evidence" value="ECO:0000304"/>
    <property type="project" value="TAIR"/>
</dbReference>
<dbReference type="GO" id="GO:0009733">
    <property type="term" value="P:response to auxin"/>
    <property type="evidence" value="ECO:0000315"/>
    <property type="project" value="TAIR"/>
</dbReference>
<dbReference type="InterPro" id="IPR017887">
    <property type="entry name" value="TF_TCP_subgr"/>
</dbReference>
<dbReference type="InterPro" id="IPR005333">
    <property type="entry name" value="Transcription_factor_TCP"/>
</dbReference>
<dbReference type="PANTHER" id="PTHR31072:SF253">
    <property type="entry name" value="TRANSCRIPTION FACTOR TCP3"/>
    <property type="match status" value="1"/>
</dbReference>
<dbReference type="PANTHER" id="PTHR31072">
    <property type="entry name" value="TRANSCRIPTION FACTOR TCP4-RELATED"/>
    <property type="match status" value="1"/>
</dbReference>
<dbReference type="Pfam" id="PF03634">
    <property type="entry name" value="TCP"/>
    <property type="match status" value="1"/>
</dbReference>
<dbReference type="PROSITE" id="PS51369">
    <property type="entry name" value="TCP"/>
    <property type="match status" value="1"/>
</dbReference>
<accession>Q9MAH8</accession>
<accession>O81369</accession>
<keyword id="KW-0217">Developmental protein</keyword>
<keyword id="KW-0238">DNA-binding</keyword>
<keyword id="KW-0539">Nucleus</keyword>
<keyword id="KW-1185">Reference proteome</keyword>
<keyword id="KW-0804">Transcription</keyword>
<keyword id="KW-0805">Transcription regulation</keyword>